<name>MGSA_EXISA</name>
<accession>C4L0B0</accession>
<organism>
    <name type="scientific">Exiguobacterium sp. (strain ATCC BAA-1283 / AT1b)</name>
    <dbReference type="NCBI Taxonomy" id="360911"/>
    <lineage>
        <taxon>Bacteria</taxon>
        <taxon>Bacillati</taxon>
        <taxon>Bacillota</taxon>
        <taxon>Bacilli</taxon>
        <taxon>Bacillales</taxon>
        <taxon>Bacillales Family XII. Incertae Sedis</taxon>
        <taxon>Exiguobacterium</taxon>
    </lineage>
</organism>
<comment type="function">
    <text evidence="1">Catalyzes the formation of methylglyoxal from dihydroxyacetone phosphate.</text>
</comment>
<comment type="catalytic activity">
    <reaction evidence="1">
        <text>dihydroxyacetone phosphate = methylglyoxal + phosphate</text>
        <dbReference type="Rhea" id="RHEA:17937"/>
        <dbReference type="ChEBI" id="CHEBI:17158"/>
        <dbReference type="ChEBI" id="CHEBI:43474"/>
        <dbReference type="ChEBI" id="CHEBI:57642"/>
        <dbReference type="EC" id="4.2.3.3"/>
    </reaction>
</comment>
<comment type="similarity">
    <text evidence="1">Belongs to the methylglyoxal synthase family.</text>
</comment>
<evidence type="ECO:0000255" key="1">
    <source>
        <dbReference type="HAMAP-Rule" id="MF_00549"/>
    </source>
</evidence>
<protein>
    <recommendedName>
        <fullName evidence="1">Methylglyoxal synthase</fullName>
        <shortName evidence="1">MGS</shortName>
        <ecNumber evidence="1">4.2.3.3</ecNumber>
    </recommendedName>
</protein>
<reference key="1">
    <citation type="journal article" date="2011" name="J. Bacteriol.">
        <title>Complete genome sequence of the Thermophilic Bacterium Exiguobacterium sp. AT1b.</title>
        <authorList>
            <person name="Vishnivetskaya T.A."/>
            <person name="Lucas S."/>
            <person name="Copeland A."/>
            <person name="Lapidus A."/>
            <person name="Glavina del Rio T."/>
            <person name="Dalin E."/>
            <person name="Tice H."/>
            <person name="Bruce D.C."/>
            <person name="Goodwin L.A."/>
            <person name="Pitluck S."/>
            <person name="Saunders E."/>
            <person name="Brettin T."/>
            <person name="Detter C."/>
            <person name="Han C."/>
            <person name="Larimer F."/>
            <person name="Land M.L."/>
            <person name="Hauser L.J."/>
            <person name="Kyrpides N.C."/>
            <person name="Ovchinnikova G."/>
            <person name="Kathariou S."/>
            <person name="Ramaley R.F."/>
            <person name="Rodrigues D.F."/>
            <person name="Hendrix C."/>
            <person name="Richardson P."/>
            <person name="Tiedje J.M."/>
        </authorList>
    </citation>
    <scope>NUCLEOTIDE SEQUENCE [LARGE SCALE GENOMIC DNA]</scope>
    <source>
        <strain>ATCC BAA-1283 / AT1b</strain>
    </source>
</reference>
<dbReference type="EC" id="4.2.3.3" evidence="1"/>
<dbReference type="EMBL" id="CP001615">
    <property type="protein sequence ID" value="ACQ70773.1"/>
    <property type="molecule type" value="Genomic_DNA"/>
</dbReference>
<dbReference type="RefSeq" id="WP_015880332.1">
    <property type="nucleotide sequence ID" value="NC_012673.1"/>
</dbReference>
<dbReference type="SMR" id="C4L0B0"/>
<dbReference type="STRING" id="360911.EAT1b_1847"/>
<dbReference type="KEGG" id="eat:EAT1b_1847"/>
<dbReference type="eggNOG" id="COG1803">
    <property type="taxonomic scope" value="Bacteria"/>
</dbReference>
<dbReference type="HOGENOM" id="CLU_120420_1_0_9"/>
<dbReference type="OrthoDB" id="9787147at2"/>
<dbReference type="Proteomes" id="UP000000716">
    <property type="component" value="Chromosome"/>
</dbReference>
<dbReference type="GO" id="GO:0005829">
    <property type="term" value="C:cytosol"/>
    <property type="evidence" value="ECO:0007669"/>
    <property type="project" value="TreeGrafter"/>
</dbReference>
<dbReference type="GO" id="GO:0008929">
    <property type="term" value="F:methylglyoxal synthase activity"/>
    <property type="evidence" value="ECO:0007669"/>
    <property type="project" value="UniProtKB-UniRule"/>
</dbReference>
<dbReference type="GO" id="GO:0019242">
    <property type="term" value="P:methylglyoxal biosynthetic process"/>
    <property type="evidence" value="ECO:0007669"/>
    <property type="project" value="UniProtKB-UniRule"/>
</dbReference>
<dbReference type="CDD" id="cd01422">
    <property type="entry name" value="MGS"/>
    <property type="match status" value="1"/>
</dbReference>
<dbReference type="FunFam" id="3.40.50.1380:FF:000006">
    <property type="entry name" value="Methylglyoxal synthase"/>
    <property type="match status" value="1"/>
</dbReference>
<dbReference type="Gene3D" id="3.40.50.1380">
    <property type="entry name" value="Methylglyoxal synthase-like domain"/>
    <property type="match status" value="1"/>
</dbReference>
<dbReference type="HAMAP" id="MF_00549">
    <property type="entry name" value="Methylglyoxal_synth"/>
    <property type="match status" value="1"/>
</dbReference>
<dbReference type="InterPro" id="IPR004363">
    <property type="entry name" value="Methylgl_synth"/>
</dbReference>
<dbReference type="InterPro" id="IPR018148">
    <property type="entry name" value="Methylglyoxal_synth_AS"/>
</dbReference>
<dbReference type="InterPro" id="IPR011607">
    <property type="entry name" value="MGS-like_dom"/>
</dbReference>
<dbReference type="InterPro" id="IPR036914">
    <property type="entry name" value="MGS-like_dom_sf"/>
</dbReference>
<dbReference type="NCBIfam" id="TIGR00160">
    <property type="entry name" value="MGSA"/>
    <property type="match status" value="1"/>
</dbReference>
<dbReference type="NCBIfam" id="NF003559">
    <property type="entry name" value="PRK05234.1"/>
    <property type="match status" value="1"/>
</dbReference>
<dbReference type="PANTHER" id="PTHR30492">
    <property type="entry name" value="METHYLGLYOXAL SYNTHASE"/>
    <property type="match status" value="1"/>
</dbReference>
<dbReference type="PANTHER" id="PTHR30492:SF0">
    <property type="entry name" value="METHYLGLYOXAL SYNTHASE"/>
    <property type="match status" value="1"/>
</dbReference>
<dbReference type="Pfam" id="PF02142">
    <property type="entry name" value="MGS"/>
    <property type="match status" value="1"/>
</dbReference>
<dbReference type="PIRSF" id="PIRSF006614">
    <property type="entry name" value="Methylglyox_syn"/>
    <property type="match status" value="1"/>
</dbReference>
<dbReference type="SMART" id="SM00851">
    <property type="entry name" value="MGS"/>
    <property type="match status" value="1"/>
</dbReference>
<dbReference type="SUPFAM" id="SSF52335">
    <property type="entry name" value="Methylglyoxal synthase-like"/>
    <property type="match status" value="1"/>
</dbReference>
<dbReference type="PROSITE" id="PS01335">
    <property type="entry name" value="METHYLGLYOXAL_SYNTH"/>
    <property type="match status" value="1"/>
</dbReference>
<dbReference type="PROSITE" id="PS51855">
    <property type="entry name" value="MGS"/>
    <property type="match status" value="1"/>
</dbReference>
<gene>
    <name evidence="1" type="primary">mgsA</name>
    <name type="ordered locus">EAT1b_1847</name>
</gene>
<sequence>MNIALVAHDKKKDDLIVLIKTYAHILKKHQLFATGTTGKRIAEATGLPVHCFRSGPLGGDQEIGAAVARGEMDMIIFFRDPLTAQPHEPDVSALMRLCDVYSIPLSTNMGGSEILIRSIEQGDFESLKLSHNDEPPA</sequence>
<proteinExistence type="inferred from homology"/>
<keyword id="KW-0456">Lyase</keyword>
<feature type="chain" id="PRO_1000211983" description="Methylglyoxal synthase">
    <location>
        <begin position="1"/>
        <end position="137"/>
    </location>
</feature>
<feature type="domain" description="MGS-like" evidence="1">
    <location>
        <begin position="1"/>
        <end position="137"/>
    </location>
</feature>
<feature type="active site" description="Proton donor/acceptor" evidence="1">
    <location>
        <position position="60"/>
    </location>
</feature>
<feature type="binding site" evidence="1">
    <location>
        <position position="8"/>
    </location>
    <ligand>
        <name>substrate</name>
    </ligand>
</feature>
<feature type="binding site" evidence="1">
    <location>
        <position position="12"/>
    </location>
    <ligand>
        <name>substrate</name>
    </ligand>
</feature>
<feature type="binding site" evidence="1">
    <location>
        <begin position="34"/>
        <end position="37"/>
    </location>
    <ligand>
        <name>substrate</name>
    </ligand>
</feature>
<feature type="binding site" evidence="1">
    <location>
        <begin position="54"/>
        <end position="55"/>
    </location>
    <ligand>
        <name>substrate</name>
    </ligand>
</feature>
<feature type="binding site" evidence="1">
    <location>
        <position position="87"/>
    </location>
    <ligand>
        <name>substrate</name>
    </ligand>
</feature>